<organism>
    <name type="scientific">Yersinia pestis bv. Antiqua (strain Angola)</name>
    <dbReference type="NCBI Taxonomy" id="349746"/>
    <lineage>
        <taxon>Bacteria</taxon>
        <taxon>Pseudomonadati</taxon>
        <taxon>Pseudomonadota</taxon>
        <taxon>Gammaproteobacteria</taxon>
        <taxon>Enterobacterales</taxon>
        <taxon>Yersiniaceae</taxon>
        <taxon>Yersinia</taxon>
    </lineage>
</organism>
<keyword id="KW-0028">Amino-acid biosynthesis</keyword>
<keyword id="KW-0963">Cytoplasm</keyword>
<keyword id="KW-0220">Diaminopimelate biosynthesis</keyword>
<keyword id="KW-0457">Lysine biosynthesis</keyword>
<keyword id="KW-0520">NAD</keyword>
<keyword id="KW-0521">NADP</keyword>
<keyword id="KW-0560">Oxidoreductase</keyword>
<protein>
    <recommendedName>
        <fullName evidence="1">4-hydroxy-tetrahydrodipicolinate reductase</fullName>
        <shortName evidence="1">HTPA reductase</shortName>
        <ecNumber evidence="1">1.17.1.8</ecNumber>
    </recommendedName>
</protein>
<feature type="chain" id="PRO_1000094023" description="4-hydroxy-tetrahydrodipicolinate reductase">
    <location>
        <begin position="1"/>
        <end position="273"/>
    </location>
</feature>
<feature type="active site" description="Proton donor/acceptor" evidence="1">
    <location>
        <position position="159"/>
    </location>
</feature>
<feature type="active site" description="Proton donor" evidence="1">
    <location>
        <position position="163"/>
    </location>
</feature>
<feature type="binding site" evidence="1">
    <location>
        <begin position="12"/>
        <end position="17"/>
    </location>
    <ligand>
        <name>NAD(+)</name>
        <dbReference type="ChEBI" id="CHEBI:57540"/>
    </ligand>
</feature>
<feature type="binding site" evidence="1">
    <location>
        <position position="38"/>
    </location>
    <ligand>
        <name>NAD(+)</name>
        <dbReference type="ChEBI" id="CHEBI:57540"/>
    </ligand>
</feature>
<feature type="binding site" evidence="1">
    <location>
        <position position="39"/>
    </location>
    <ligand>
        <name>NADP(+)</name>
        <dbReference type="ChEBI" id="CHEBI:58349"/>
    </ligand>
</feature>
<feature type="binding site" evidence="1">
    <location>
        <begin position="102"/>
        <end position="104"/>
    </location>
    <ligand>
        <name>NAD(+)</name>
        <dbReference type="ChEBI" id="CHEBI:57540"/>
    </ligand>
</feature>
<feature type="binding site" evidence="1">
    <location>
        <begin position="126"/>
        <end position="129"/>
    </location>
    <ligand>
        <name>NAD(+)</name>
        <dbReference type="ChEBI" id="CHEBI:57540"/>
    </ligand>
</feature>
<feature type="binding site" evidence="1">
    <location>
        <position position="160"/>
    </location>
    <ligand>
        <name>(S)-2,3,4,5-tetrahydrodipicolinate</name>
        <dbReference type="ChEBI" id="CHEBI:16845"/>
    </ligand>
</feature>
<feature type="binding site" evidence="1">
    <location>
        <begin position="169"/>
        <end position="170"/>
    </location>
    <ligand>
        <name>(S)-2,3,4,5-tetrahydrodipicolinate</name>
        <dbReference type="ChEBI" id="CHEBI:16845"/>
    </ligand>
</feature>
<proteinExistence type="inferred from homology"/>
<gene>
    <name evidence="1" type="primary">dapB</name>
    <name type="ordered locus">YpAngola_A0785</name>
</gene>
<dbReference type="EC" id="1.17.1.8" evidence="1"/>
<dbReference type="EMBL" id="CP000901">
    <property type="protein sequence ID" value="ABX87920.1"/>
    <property type="molecule type" value="Genomic_DNA"/>
</dbReference>
<dbReference type="RefSeq" id="WP_002210504.1">
    <property type="nucleotide sequence ID" value="NZ_CP009935.1"/>
</dbReference>
<dbReference type="SMR" id="A9R003"/>
<dbReference type="GeneID" id="57974130"/>
<dbReference type="KEGG" id="ypg:YpAngola_A0785"/>
<dbReference type="PATRIC" id="fig|349746.12.peg.1733"/>
<dbReference type="UniPathway" id="UPA00034">
    <property type="reaction ID" value="UER00018"/>
</dbReference>
<dbReference type="GO" id="GO:0005829">
    <property type="term" value="C:cytosol"/>
    <property type="evidence" value="ECO:0007669"/>
    <property type="project" value="TreeGrafter"/>
</dbReference>
<dbReference type="GO" id="GO:0008839">
    <property type="term" value="F:4-hydroxy-tetrahydrodipicolinate reductase"/>
    <property type="evidence" value="ECO:0007669"/>
    <property type="project" value="UniProtKB-EC"/>
</dbReference>
<dbReference type="GO" id="GO:0051287">
    <property type="term" value="F:NAD binding"/>
    <property type="evidence" value="ECO:0007669"/>
    <property type="project" value="UniProtKB-UniRule"/>
</dbReference>
<dbReference type="GO" id="GO:0050661">
    <property type="term" value="F:NADP binding"/>
    <property type="evidence" value="ECO:0007669"/>
    <property type="project" value="UniProtKB-UniRule"/>
</dbReference>
<dbReference type="GO" id="GO:0016726">
    <property type="term" value="F:oxidoreductase activity, acting on CH or CH2 groups, NAD or NADP as acceptor"/>
    <property type="evidence" value="ECO:0007669"/>
    <property type="project" value="UniProtKB-UniRule"/>
</dbReference>
<dbReference type="GO" id="GO:0019877">
    <property type="term" value="P:diaminopimelate biosynthetic process"/>
    <property type="evidence" value="ECO:0007669"/>
    <property type="project" value="UniProtKB-UniRule"/>
</dbReference>
<dbReference type="GO" id="GO:0009089">
    <property type="term" value="P:lysine biosynthetic process via diaminopimelate"/>
    <property type="evidence" value="ECO:0007669"/>
    <property type="project" value="UniProtKB-UniRule"/>
</dbReference>
<dbReference type="CDD" id="cd02274">
    <property type="entry name" value="DHDPR_N"/>
    <property type="match status" value="1"/>
</dbReference>
<dbReference type="FunFam" id="3.30.360.10:FF:000004">
    <property type="entry name" value="4-hydroxy-tetrahydrodipicolinate reductase"/>
    <property type="match status" value="1"/>
</dbReference>
<dbReference type="FunFam" id="3.40.50.720:FF:000048">
    <property type="entry name" value="4-hydroxy-tetrahydrodipicolinate reductase"/>
    <property type="match status" value="1"/>
</dbReference>
<dbReference type="Gene3D" id="3.30.360.10">
    <property type="entry name" value="Dihydrodipicolinate Reductase, domain 2"/>
    <property type="match status" value="1"/>
</dbReference>
<dbReference type="Gene3D" id="3.40.50.720">
    <property type="entry name" value="NAD(P)-binding Rossmann-like Domain"/>
    <property type="match status" value="1"/>
</dbReference>
<dbReference type="HAMAP" id="MF_00102">
    <property type="entry name" value="DapB"/>
    <property type="match status" value="1"/>
</dbReference>
<dbReference type="InterPro" id="IPR022663">
    <property type="entry name" value="DapB_C"/>
</dbReference>
<dbReference type="InterPro" id="IPR000846">
    <property type="entry name" value="DapB_N"/>
</dbReference>
<dbReference type="InterPro" id="IPR022664">
    <property type="entry name" value="DapB_N_CS"/>
</dbReference>
<dbReference type="InterPro" id="IPR023940">
    <property type="entry name" value="DHDPR_bac"/>
</dbReference>
<dbReference type="InterPro" id="IPR036291">
    <property type="entry name" value="NAD(P)-bd_dom_sf"/>
</dbReference>
<dbReference type="NCBIfam" id="TIGR00036">
    <property type="entry name" value="dapB"/>
    <property type="match status" value="1"/>
</dbReference>
<dbReference type="PANTHER" id="PTHR20836:SF0">
    <property type="entry name" value="4-HYDROXY-TETRAHYDRODIPICOLINATE REDUCTASE 1, CHLOROPLASTIC-RELATED"/>
    <property type="match status" value="1"/>
</dbReference>
<dbReference type="PANTHER" id="PTHR20836">
    <property type="entry name" value="DIHYDRODIPICOLINATE REDUCTASE"/>
    <property type="match status" value="1"/>
</dbReference>
<dbReference type="Pfam" id="PF05173">
    <property type="entry name" value="DapB_C"/>
    <property type="match status" value="1"/>
</dbReference>
<dbReference type="Pfam" id="PF01113">
    <property type="entry name" value="DapB_N"/>
    <property type="match status" value="1"/>
</dbReference>
<dbReference type="PIRSF" id="PIRSF000161">
    <property type="entry name" value="DHPR"/>
    <property type="match status" value="1"/>
</dbReference>
<dbReference type="SUPFAM" id="SSF55347">
    <property type="entry name" value="Glyceraldehyde-3-phosphate dehydrogenase-like, C-terminal domain"/>
    <property type="match status" value="1"/>
</dbReference>
<dbReference type="SUPFAM" id="SSF51735">
    <property type="entry name" value="NAD(P)-binding Rossmann-fold domains"/>
    <property type="match status" value="1"/>
</dbReference>
<dbReference type="PROSITE" id="PS01298">
    <property type="entry name" value="DAPB"/>
    <property type="match status" value="1"/>
</dbReference>
<accession>A9R003</accession>
<sequence length="273" mass="28888">MTDSTIRIAIVGAGGRMGRQLIQAVTQMEGVVLGAAIERKGSTLVGSDAGELAGVGLLNVIVGDDLSQLTDNFDVLIDFTRPEGTLEHLAICRQHRKAMVIGTTGFDEAGKAAISEAAADIGIVFAANFSVGVNVVLKLLEKAAKVMGDYTDIEIIEAHHRHKVDAPSGTALAMGEAIADAMGRSLKDCAVYSREGYTGERKPGTIGFATVRAGDIVGEHTAMFADIGERVEITHKATSRMTFAHGAVKSAIWLGKHDNGLFDMRDVLNLNEL</sequence>
<evidence type="ECO:0000255" key="1">
    <source>
        <dbReference type="HAMAP-Rule" id="MF_00102"/>
    </source>
</evidence>
<evidence type="ECO:0000305" key="2"/>
<name>DAPB_YERPG</name>
<reference key="1">
    <citation type="journal article" date="2010" name="J. Bacteriol.">
        <title>Genome sequence of the deep-rooted Yersinia pestis strain Angola reveals new insights into the evolution and pangenome of the plague bacterium.</title>
        <authorList>
            <person name="Eppinger M."/>
            <person name="Worsham P.L."/>
            <person name="Nikolich M.P."/>
            <person name="Riley D.R."/>
            <person name="Sebastian Y."/>
            <person name="Mou S."/>
            <person name="Achtman M."/>
            <person name="Lindler L.E."/>
            <person name="Ravel J."/>
        </authorList>
    </citation>
    <scope>NUCLEOTIDE SEQUENCE [LARGE SCALE GENOMIC DNA]</scope>
    <source>
        <strain>Angola</strain>
    </source>
</reference>
<comment type="function">
    <text evidence="1">Catalyzes the conversion of 4-hydroxy-tetrahydrodipicolinate (HTPA) to tetrahydrodipicolinate.</text>
</comment>
<comment type="catalytic activity">
    <reaction evidence="1">
        <text>(S)-2,3,4,5-tetrahydrodipicolinate + NAD(+) + H2O = (2S,4S)-4-hydroxy-2,3,4,5-tetrahydrodipicolinate + NADH + H(+)</text>
        <dbReference type="Rhea" id="RHEA:35323"/>
        <dbReference type="ChEBI" id="CHEBI:15377"/>
        <dbReference type="ChEBI" id="CHEBI:15378"/>
        <dbReference type="ChEBI" id="CHEBI:16845"/>
        <dbReference type="ChEBI" id="CHEBI:57540"/>
        <dbReference type="ChEBI" id="CHEBI:57945"/>
        <dbReference type="ChEBI" id="CHEBI:67139"/>
        <dbReference type="EC" id="1.17.1.8"/>
    </reaction>
</comment>
<comment type="catalytic activity">
    <reaction evidence="1">
        <text>(S)-2,3,4,5-tetrahydrodipicolinate + NADP(+) + H2O = (2S,4S)-4-hydroxy-2,3,4,5-tetrahydrodipicolinate + NADPH + H(+)</text>
        <dbReference type="Rhea" id="RHEA:35331"/>
        <dbReference type="ChEBI" id="CHEBI:15377"/>
        <dbReference type="ChEBI" id="CHEBI:15378"/>
        <dbReference type="ChEBI" id="CHEBI:16845"/>
        <dbReference type="ChEBI" id="CHEBI:57783"/>
        <dbReference type="ChEBI" id="CHEBI:58349"/>
        <dbReference type="ChEBI" id="CHEBI:67139"/>
        <dbReference type="EC" id="1.17.1.8"/>
    </reaction>
</comment>
<comment type="pathway">
    <text evidence="1">Amino-acid biosynthesis; L-lysine biosynthesis via DAP pathway; (S)-tetrahydrodipicolinate from L-aspartate: step 4/4.</text>
</comment>
<comment type="subunit">
    <text evidence="1">Homotetramer.</text>
</comment>
<comment type="subcellular location">
    <subcellularLocation>
        <location evidence="1">Cytoplasm</location>
    </subcellularLocation>
</comment>
<comment type="similarity">
    <text evidence="1">Belongs to the DapB family.</text>
</comment>
<comment type="caution">
    <text evidence="2">Was originally thought to be a dihydrodipicolinate reductase (DHDPR), catalyzing the conversion of dihydrodipicolinate to tetrahydrodipicolinate. However, it was shown in E.coli that the substrate of the enzymatic reaction is not dihydrodipicolinate (DHDP) but in fact (2S,4S)-4-hydroxy-2,3,4,5-tetrahydrodipicolinic acid (HTPA), the product released by the DapA-catalyzed reaction.</text>
</comment>